<evidence type="ECO:0000255" key="1">
    <source>
        <dbReference type="PROSITE-ProRule" id="PRU00395"/>
    </source>
</evidence>
<evidence type="ECO:0000269" key="2">
    <source>
    </source>
</evidence>
<evidence type="ECO:0000303" key="3">
    <source>
    </source>
</evidence>
<evidence type="ECO:0000305" key="4"/>
<evidence type="ECO:0000305" key="5">
    <source>
    </source>
</evidence>
<keyword id="KW-0204">Cytolysis</keyword>
<keyword id="KW-0903">Direct protein sequencing</keyword>
<keyword id="KW-1015">Disulfide bond</keyword>
<keyword id="KW-0960">Knottin</keyword>
<keyword id="KW-0611">Plant defense</keyword>
<comment type="function">
    <text evidence="1 2">Probably participates in a plant defense mechanism (Potential). Binds to and induces leakage in phospholipd membranes, particularly ones containing 1-palmitoyl-2-oleophosphatidylethanolamine (POPE) (PubMed:26322745). In vitro, displays cytotoxicity against cultured cells but no hemolytic activity towards fresh erythrocytes (PubMed:26322745).</text>
</comment>
<comment type="domain">
    <text evidence="4">The presence of a 'disulfide through disulfide knot' structurally defines this protein as a knottin.</text>
</comment>
<comment type="PTM">
    <text evidence="1 2">This is a cyclic peptide.</text>
</comment>
<comment type="PTM">
    <text evidence="2">Contains 3 disulfide bonds.</text>
</comment>
<comment type="mass spectrometry" mass="3123.3" method="Electrospray" evidence="2"/>
<comment type="similarity">
    <text evidence="1">Belongs to the cyclotide family. Moebius subfamily.</text>
</comment>
<comment type="caution">
    <text evidence="1">This peptide is cyclic. The start position was chosen by similarity to Oak1 (kalata B1) for which the DNA sequence is known.</text>
</comment>
<feature type="peptide" id="PRO_0000437516" description="Cyclotide mech-3" evidence="1 2">
    <location>
        <begin position="1"/>
        <end position="29"/>
    </location>
</feature>
<feature type="disulfide bond" evidence="1">
    <location>
        <begin position="5"/>
        <end position="19"/>
    </location>
</feature>
<feature type="disulfide bond" evidence="1">
    <location>
        <begin position="9"/>
        <end position="21"/>
    </location>
</feature>
<feature type="disulfide bond" evidence="1">
    <location>
        <begin position="14"/>
        <end position="26"/>
    </location>
</feature>
<feature type="cross-link" description="Cyclopeptide (Gly-Asn)" evidence="5">
    <location>
        <begin position="1"/>
        <end position="29"/>
    </location>
</feature>
<protein>
    <recommendedName>
        <fullName evidence="3">Cyclotide mech-3</fullName>
    </recommendedName>
</protein>
<dbReference type="SMR" id="C0HK37"/>
<dbReference type="GO" id="GO:0006952">
    <property type="term" value="P:defense response"/>
    <property type="evidence" value="ECO:0007669"/>
    <property type="project" value="UniProtKB-KW"/>
</dbReference>
<dbReference type="GO" id="GO:0031640">
    <property type="term" value="P:killing of cells of another organism"/>
    <property type="evidence" value="ECO:0007669"/>
    <property type="project" value="UniProtKB-KW"/>
</dbReference>
<dbReference type="InterPro" id="IPR005535">
    <property type="entry name" value="Cyclotide"/>
</dbReference>
<dbReference type="InterPro" id="IPR012324">
    <property type="entry name" value="Cyclotide_moebius_CS"/>
</dbReference>
<dbReference type="InterPro" id="IPR036146">
    <property type="entry name" value="Cyclotide_sf"/>
</dbReference>
<dbReference type="Pfam" id="PF03784">
    <property type="entry name" value="Cyclotide"/>
    <property type="match status" value="1"/>
</dbReference>
<dbReference type="SUPFAM" id="SSF57038">
    <property type="entry name" value="Cyclotides"/>
    <property type="match status" value="1"/>
</dbReference>
<dbReference type="PROSITE" id="PS51052">
    <property type="entry name" value="CYCLOTIDE"/>
    <property type="match status" value="1"/>
</dbReference>
<dbReference type="PROSITE" id="PS60009">
    <property type="entry name" value="CYCLOTIDE_MOEBIUS"/>
    <property type="match status" value="1"/>
</dbReference>
<proteinExistence type="evidence at protein level"/>
<reference evidence="4" key="1">
    <citation type="journal article" date="2015" name="ACS Chem. Biol.">
        <title>Lysine-rich cyclotides: a new subclass of circular knotted proteins from Violaceae.</title>
        <authorList>
            <person name="Ravipati A.S."/>
            <person name="Henriques S.T."/>
            <person name="Poth A.G."/>
            <person name="Kaas Q."/>
            <person name="Wang C.K."/>
            <person name="Colgrave M.L."/>
            <person name="Craik D.J."/>
        </authorList>
    </citation>
    <scope>PROTEIN SEQUENCE</scope>
    <scope>FUNCTION</scope>
    <scope>MASS SPECTROMETRY</scope>
    <scope>IDENTIFICATION BY MASS SPECTROMETRY</scope>
    <scope>PRESENCE OF DISULFIDE BONDS</scope>
    <scope>CYCLIZATION</scope>
    <scope>STRUCTURE BY NMR</scope>
</reference>
<organism evidence="3">
    <name type="scientific">Melicytus chathamicus</name>
    <name type="common">Chatham Island mahoe</name>
    <name type="synonym">Hymenanthera latifolia var. chathamica</name>
    <dbReference type="NCBI Taxonomy" id="453349"/>
    <lineage>
        <taxon>Eukaryota</taxon>
        <taxon>Viridiplantae</taxon>
        <taxon>Streptophyta</taxon>
        <taxon>Embryophyta</taxon>
        <taxon>Tracheophyta</taxon>
        <taxon>Spermatophyta</taxon>
        <taxon>Magnoliopsida</taxon>
        <taxon>eudicotyledons</taxon>
        <taxon>Gunneridae</taxon>
        <taxon>Pentapetalae</taxon>
        <taxon>rosids</taxon>
        <taxon>fabids</taxon>
        <taxon>Malpighiales</taxon>
        <taxon>Violaceae</taxon>
        <taxon>Melicytus</taxon>
    </lineage>
</organism>
<sequence length="29" mass="3150">GLPTCGETCTLGKCNTPKCTCNWPICYKN</sequence>
<accession>C0HK37</accession>
<name>CYMC3_MELCT</name>